<gene>
    <name evidence="1" type="primary">gatA</name>
    <name type="ORF">DDB_G0286875</name>
</gene>
<name>GATA_DICDI</name>
<reference key="1">
    <citation type="journal article" date="2005" name="Nature">
        <title>The genome of the social amoeba Dictyostelium discoideum.</title>
        <authorList>
            <person name="Eichinger L."/>
            <person name="Pachebat J.A."/>
            <person name="Gloeckner G."/>
            <person name="Rajandream M.A."/>
            <person name="Sucgang R."/>
            <person name="Berriman M."/>
            <person name="Song J."/>
            <person name="Olsen R."/>
            <person name="Szafranski K."/>
            <person name="Xu Q."/>
            <person name="Tunggal B."/>
            <person name="Kummerfeld S."/>
            <person name="Madera M."/>
            <person name="Konfortov B.A."/>
            <person name="Rivero F."/>
            <person name="Bankier A.T."/>
            <person name="Lehmann R."/>
            <person name="Hamlin N."/>
            <person name="Davies R."/>
            <person name="Gaudet P."/>
            <person name="Fey P."/>
            <person name="Pilcher K."/>
            <person name="Chen G."/>
            <person name="Saunders D."/>
            <person name="Sodergren E.J."/>
            <person name="Davis P."/>
            <person name="Kerhornou A."/>
            <person name="Nie X."/>
            <person name="Hall N."/>
            <person name="Anjard C."/>
            <person name="Hemphill L."/>
            <person name="Bason N."/>
            <person name="Farbrother P."/>
            <person name="Desany B."/>
            <person name="Just E."/>
            <person name="Morio T."/>
            <person name="Rost R."/>
            <person name="Churcher C.M."/>
            <person name="Cooper J."/>
            <person name="Haydock S."/>
            <person name="van Driessche N."/>
            <person name="Cronin A."/>
            <person name="Goodhead I."/>
            <person name="Muzny D.M."/>
            <person name="Mourier T."/>
            <person name="Pain A."/>
            <person name="Lu M."/>
            <person name="Harper D."/>
            <person name="Lindsay R."/>
            <person name="Hauser H."/>
            <person name="James K.D."/>
            <person name="Quiles M."/>
            <person name="Madan Babu M."/>
            <person name="Saito T."/>
            <person name="Buchrieser C."/>
            <person name="Wardroper A."/>
            <person name="Felder M."/>
            <person name="Thangavelu M."/>
            <person name="Johnson D."/>
            <person name="Knights A."/>
            <person name="Loulseged H."/>
            <person name="Mungall K.L."/>
            <person name="Oliver K."/>
            <person name="Price C."/>
            <person name="Quail M.A."/>
            <person name="Urushihara H."/>
            <person name="Hernandez J."/>
            <person name="Rabbinowitsch E."/>
            <person name="Steffen D."/>
            <person name="Sanders M."/>
            <person name="Ma J."/>
            <person name="Kohara Y."/>
            <person name="Sharp S."/>
            <person name="Simmonds M.N."/>
            <person name="Spiegler S."/>
            <person name="Tivey A."/>
            <person name="Sugano S."/>
            <person name="White B."/>
            <person name="Walker D."/>
            <person name="Woodward J.R."/>
            <person name="Winckler T."/>
            <person name="Tanaka Y."/>
            <person name="Shaulsky G."/>
            <person name="Schleicher M."/>
            <person name="Weinstock G.M."/>
            <person name="Rosenthal A."/>
            <person name="Cox E.C."/>
            <person name="Chisholm R.L."/>
            <person name="Gibbs R.A."/>
            <person name="Loomis W.F."/>
            <person name="Platzer M."/>
            <person name="Kay R.R."/>
            <person name="Williams J.G."/>
            <person name="Dear P.H."/>
            <person name="Noegel A.A."/>
            <person name="Barrell B.G."/>
            <person name="Kuspa A."/>
        </authorList>
    </citation>
    <scope>NUCLEOTIDE SEQUENCE [LARGE SCALE GENOMIC DNA]</scope>
    <source>
        <strain>AX4</strain>
    </source>
</reference>
<sequence length="550" mass="61155">MNRLTNISKIRKSLIDGKLKVNDLVLNKIKEINKVSPNHLNTFISLQDEKSLGKQIKESQERYDNGTNKRLDGIPIGVKDNFSSKNFKTTCGSKILENYIPSFDSTVVKLLKEEGAIIIGKTNMDEFSMGSSSTSGHFGKVINPWSKPNNNNNNDNDNNNNGEVLYVAGGSSGGSAAAVASNYCVASIGSDTGGSIRQPSSYCGVVGFKPSYGLISRFGLVAYASSLDTPGVLTNNVEDAAELLDILIKKDQENDSTSIEFINNNQNQNQNNGEKRNILDEFNEKLKNKNIKDLVFGIPKDYLVKELDTDILNLWKEVVEEIEKRGGKVVSVSLPHTRYALPAYYLLATSEASSNLSRFDGVRYGYRFEEEKDENKVDNDNDDDDDVDENKIGMGLKDMYTKTRTNGFGEEVKKRIILGTMALSRSSYDNFYTKAQKIRRLVSDDFKNVFQGENKVDILITPTAPSPAFKQNEKMDPIEVYVNDIMTIPSNLAGLPACSIPLKLSNSNLPISVQLISNRLTDDNLLFAAHTIMNFDCYKDFTSLTPNYLK</sequence>
<proteinExistence type="inferred from homology"/>
<comment type="function">
    <text evidence="1">Allows the formation of correctly charged Gln-tRNA(Gln) through the transamidation of misacylated Glu-tRNA(Gln) in the mitochondria. The reaction takes place in the presence of glutamine and ATP through an activated gamma-phospho-Glu-tRNA(Gln).</text>
</comment>
<comment type="catalytic activity">
    <reaction evidence="1">
        <text>L-glutamyl-tRNA(Gln) + L-glutamine + ATP + H2O = L-glutaminyl-tRNA(Gln) + L-glutamate + ADP + phosphate + H(+)</text>
        <dbReference type="Rhea" id="RHEA:17521"/>
        <dbReference type="Rhea" id="RHEA-COMP:9681"/>
        <dbReference type="Rhea" id="RHEA-COMP:9684"/>
        <dbReference type="ChEBI" id="CHEBI:15377"/>
        <dbReference type="ChEBI" id="CHEBI:15378"/>
        <dbReference type="ChEBI" id="CHEBI:29985"/>
        <dbReference type="ChEBI" id="CHEBI:30616"/>
        <dbReference type="ChEBI" id="CHEBI:43474"/>
        <dbReference type="ChEBI" id="CHEBI:58359"/>
        <dbReference type="ChEBI" id="CHEBI:78520"/>
        <dbReference type="ChEBI" id="CHEBI:78521"/>
        <dbReference type="ChEBI" id="CHEBI:456216"/>
        <dbReference type="EC" id="6.3.5.7"/>
    </reaction>
</comment>
<comment type="subunit">
    <text evidence="1">Subunit of the heterotrimeric GatCAB amidotransferase (AdT) complex, composed of A, B and C subunits.</text>
</comment>
<comment type="subcellular location">
    <subcellularLocation>
        <location evidence="1">Mitochondrion</location>
    </subcellularLocation>
</comment>
<comment type="similarity">
    <text evidence="1">Belongs to the amidase family. GatA subfamily.</text>
</comment>
<keyword id="KW-0067">ATP-binding</keyword>
<keyword id="KW-0436">Ligase</keyword>
<keyword id="KW-0496">Mitochondrion</keyword>
<keyword id="KW-0547">Nucleotide-binding</keyword>
<keyword id="KW-0648">Protein biosynthesis</keyword>
<keyword id="KW-1185">Reference proteome</keyword>
<feature type="chain" id="PRO_0000328512" description="Glutamyl-tRNA(Gln) amidotransferase subunit A, mitochondrial">
    <location>
        <begin position="1"/>
        <end position="550"/>
    </location>
</feature>
<feature type="region of interest" description="Disordered" evidence="2">
    <location>
        <begin position="371"/>
        <end position="390"/>
    </location>
</feature>
<feature type="active site" description="Charge relay system" evidence="1">
    <location>
        <position position="79"/>
    </location>
</feature>
<feature type="active site" description="Charge relay system" evidence="1">
    <location>
        <position position="171"/>
    </location>
</feature>
<feature type="active site" description="Acyl-ester intermediate" evidence="1">
    <location>
        <position position="195"/>
    </location>
</feature>
<organism>
    <name type="scientific">Dictyostelium discoideum</name>
    <name type="common">Social amoeba</name>
    <dbReference type="NCBI Taxonomy" id="44689"/>
    <lineage>
        <taxon>Eukaryota</taxon>
        <taxon>Amoebozoa</taxon>
        <taxon>Evosea</taxon>
        <taxon>Eumycetozoa</taxon>
        <taxon>Dictyostelia</taxon>
        <taxon>Dictyosteliales</taxon>
        <taxon>Dictyosteliaceae</taxon>
        <taxon>Dictyostelium</taxon>
    </lineage>
</organism>
<protein>
    <recommendedName>
        <fullName evidence="1">Glutamyl-tRNA(Gln) amidotransferase subunit A, mitochondrial</fullName>
        <shortName evidence="1">Glu-AdT subunit A</shortName>
        <ecNumber evidence="1">6.3.5.7</ecNumber>
    </recommendedName>
</protein>
<evidence type="ECO:0000255" key="1">
    <source>
        <dbReference type="HAMAP-Rule" id="MF_03150"/>
    </source>
</evidence>
<evidence type="ECO:0000256" key="2">
    <source>
        <dbReference type="SAM" id="MobiDB-lite"/>
    </source>
</evidence>
<dbReference type="EC" id="6.3.5.7" evidence="1"/>
<dbReference type="EMBL" id="AAFI02000091">
    <property type="protein sequence ID" value="EAL63995.1"/>
    <property type="molecule type" value="Genomic_DNA"/>
</dbReference>
<dbReference type="RefSeq" id="XP_637500.1">
    <property type="nucleotide sequence ID" value="XM_632408.1"/>
</dbReference>
<dbReference type="SMR" id="Q54L63"/>
<dbReference type="FunCoup" id="Q54L63">
    <property type="interactions" value="178"/>
</dbReference>
<dbReference type="STRING" id="44689.Q54L63"/>
<dbReference type="GlyGen" id="Q54L63">
    <property type="glycosylation" value="1 site"/>
</dbReference>
<dbReference type="PaxDb" id="44689-DDB0266930"/>
<dbReference type="EnsemblProtists" id="EAL63995">
    <property type="protein sequence ID" value="EAL63995"/>
    <property type="gene ID" value="DDB_G0286875"/>
</dbReference>
<dbReference type="GeneID" id="8625839"/>
<dbReference type="KEGG" id="ddi:DDB_G0286875"/>
<dbReference type="dictyBase" id="DDB_G0286875">
    <property type="gene designation" value="gatA"/>
</dbReference>
<dbReference type="VEuPathDB" id="AmoebaDB:DDB_G0286875"/>
<dbReference type="eggNOG" id="KOG1211">
    <property type="taxonomic scope" value="Eukaryota"/>
</dbReference>
<dbReference type="HOGENOM" id="CLU_009600_7_5_1"/>
<dbReference type="InParanoid" id="Q54L63"/>
<dbReference type="OMA" id="QPASYCG"/>
<dbReference type="PhylomeDB" id="Q54L63"/>
<dbReference type="PRO" id="PR:Q54L63"/>
<dbReference type="Proteomes" id="UP000002195">
    <property type="component" value="Chromosome 4"/>
</dbReference>
<dbReference type="GO" id="GO:0030956">
    <property type="term" value="C:glutamyl-tRNA(Gln) amidotransferase complex"/>
    <property type="evidence" value="ECO:0000318"/>
    <property type="project" value="GO_Central"/>
</dbReference>
<dbReference type="GO" id="GO:0005739">
    <property type="term" value="C:mitochondrion"/>
    <property type="evidence" value="ECO:0000318"/>
    <property type="project" value="GO_Central"/>
</dbReference>
<dbReference type="GO" id="GO:0005524">
    <property type="term" value="F:ATP binding"/>
    <property type="evidence" value="ECO:0007669"/>
    <property type="project" value="UniProtKB-KW"/>
</dbReference>
<dbReference type="GO" id="GO:0050567">
    <property type="term" value="F:glutaminyl-tRNA synthase (glutamine-hydrolyzing) activity"/>
    <property type="evidence" value="ECO:0000318"/>
    <property type="project" value="GO_Central"/>
</dbReference>
<dbReference type="GO" id="GO:0070681">
    <property type="term" value="P:glutaminyl-tRNAGln biosynthesis via transamidation"/>
    <property type="evidence" value="ECO:0000318"/>
    <property type="project" value="GO_Central"/>
</dbReference>
<dbReference type="GO" id="GO:0032543">
    <property type="term" value="P:mitochondrial translation"/>
    <property type="evidence" value="ECO:0000318"/>
    <property type="project" value="GO_Central"/>
</dbReference>
<dbReference type="Gene3D" id="3.90.1300.10">
    <property type="entry name" value="Amidase signature (AS) domain"/>
    <property type="match status" value="1"/>
</dbReference>
<dbReference type="HAMAP" id="MF_00120">
    <property type="entry name" value="GatA"/>
    <property type="match status" value="1"/>
</dbReference>
<dbReference type="InterPro" id="IPR000120">
    <property type="entry name" value="Amidase"/>
</dbReference>
<dbReference type="InterPro" id="IPR020556">
    <property type="entry name" value="Amidase_CS"/>
</dbReference>
<dbReference type="InterPro" id="IPR023631">
    <property type="entry name" value="Amidase_dom"/>
</dbReference>
<dbReference type="InterPro" id="IPR036928">
    <property type="entry name" value="AS_sf"/>
</dbReference>
<dbReference type="InterPro" id="IPR004412">
    <property type="entry name" value="GatA"/>
</dbReference>
<dbReference type="NCBIfam" id="TIGR00132">
    <property type="entry name" value="gatA"/>
    <property type="match status" value="1"/>
</dbReference>
<dbReference type="PANTHER" id="PTHR11895:SF7">
    <property type="entry name" value="GLUTAMYL-TRNA(GLN) AMIDOTRANSFERASE SUBUNIT A, MITOCHONDRIAL"/>
    <property type="match status" value="1"/>
</dbReference>
<dbReference type="PANTHER" id="PTHR11895">
    <property type="entry name" value="TRANSAMIDASE"/>
    <property type="match status" value="1"/>
</dbReference>
<dbReference type="Pfam" id="PF01425">
    <property type="entry name" value="Amidase"/>
    <property type="match status" value="1"/>
</dbReference>
<dbReference type="SUPFAM" id="SSF75304">
    <property type="entry name" value="Amidase signature (AS) enzymes"/>
    <property type="match status" value="1"/>
</dbReference>
<dbReference type="PROSITE" id="PS00571">
    <property type="entry name" value="AMIDASES"/>
    <property type="match status" value="1"/>
</dbReference>
<accession>Q54L63</accession>